<evidence type="ECO:0000256" key="1">
    <source>
        <dbReference type="SAM" id="MobiDB-lite"/>
    </source>
</evidence>
<evidence type="ECO:0000305" key="2"/>
<feature type="chain" id="PRO_0000288860" description="Protein FAM216A">
    <location>
        <begin position="1"/>
        <end position="251"/>
    </location>
</feature>
<feature type="region of interest" description="Disordered" evidence="1">
    <location>
        <begin position="1"/>
        <end position="49"/>
    </location>
</feature>
<feature type="compositionally biased region" description="Polar residues" evidence="1">
    <location>
        <begin position="1"/>
        <end position="16"/>
    </location>
</feature>
<organism>
    <name type="scientific">Bos taurus</name>
    <name type="common">Bovine</name>
    <dbReference type="NCBI Taxonomy" id="9913"/>
    <lineage>
        <taxon>Eukaryota</taxon>
        <taxon>Metazoa</taxon>
        <taxon>Chordata</taxon>
        <taxon>Craniata</taxon>
        <taxon>Vertebrata</taxon>
        <taxon>Euteleostomi</taxon>
        <taxon>Mammalia</taxon>
        <taxon>Eutheria</taxon>
        <taxon>Laurasiatheria</taxon>
        <taxon>Artiodactyla</taxon>
        <taxon>Ruminantia</taxon>
        <taxon>Pecora</taxon>
        <taxon>Bovidae</taxon>
        <taxon>Bovinae</taxon>
        <taxon>Bos</taxon>
    </lineage>
</organism>
<comment type="similarity">
    <text evidence="2">Belongs to the FAM216 family.</text>
</comment>
<keyword id="KW-1185">Reference proteome</keyword>
<protein>
    <recommendedName>
        <fullName>Protein FAM216A</fullName>
    </recommendedName>
</protein>
<name>F216A_BOVIN</name>
<accession>Q3SZW6</accession>
<dbReference type="EMBL" id="BC102676">
    <property type="protein sequence ID" value="AAI02677.1"/>
    <property type="molecule type" value="mRNA"/>
</dbReference>
<dbReference type="RefSeq" id="NP_001030557.1">
    <property type="nucleotide sequence ID" value="NM_001035480.2"/>
</dbReference>
<dbReference type="SMR" id="Q3SZW6"/>
<dbReference type="FunCoup" id="Q3SZW6">
    <property type="interactions" value="1211"/>
</dbReference>
<dbReference type="STRING" id="9913.ENSBTAP00000029608"/>
<dbReference type="PaxDb" id="9913-ENSBTAP00000029608"/>
<dbReference type="GeneID" id="616613"/>
<dbReference type="KEGG" id="bta:616613"/>
<dbReference type="CTD" id="29902"/>
<dbReference type="VEuPathDB" id="HostDB:ENSBTAG00000022067"/>
<dbReference type="eggNOG" id="ENOG502SC0D">
    <property type="taxonomic scope" value="Eukaryota"/>
</dbReference>
<dbReference type="HOGENOM" id="CLU_096833_0_0_1"/>
<dbReference type="InParanoid" id="Q3SZW6"/>
<dbReference type="OMA" id="KPGRLFM"/>
<dbReference type="OrthoDB" id="5980156at2759"/>
<dbReference type="TreeFam" id="TF337546"/>
<dbReference type="Proteomes" id="UP000009136">
    <property type="component" value="Chromosome 17"/>
</dbReference>
<dbReference type="Bgee" id="ENSBTAG00000022067">
    <property type="expression patterns" value="Expressed in spermatocyte and 100 other cell types or tissues"/>
</dbReference>
<dbReference type="InterPro" id="IPR029373">
    <property type="entry name" value="FAM216"/>
</dbReference>
<dbReference type="PANTHER" id="PTHR16476">
    <property type="entry name" value="FAMILY WITH SEQUENCE SIMILARITY 216 MEMBER A"/>
    <property type="match status" value="1"/>
</dbReference>
<dbReference type="PANTHER" id="PTHR16476:SF1">
    <property type="entry name" value="PROTEIN FAM216A"/>
    <property type="match status" value="1"/>
</dbReference>
<dbReference type="Pfam" id="PF15107">
    <property type="entry name" value="FAM216B"/>
    <property type="match status" value="1"/>
</dbReference>
<gene>
    <name type="primary">FAM216A</name>
</gene>
<reference key="1">
    <citation type="submission" date="2005-08" db="EMBL/GenBank/DDBJ databases">
        <authorList>
            <consortium name="NIH - Mammalian Gene Collection (MGC) project"/>
        </authorList>
    </citation>
    <scope>NUCLEOTIDE SEQUENCE [LARGE SCALE MRNA]</scope>
    <source>
        <strain>Crossbred X Angus</strain>
        <tissue>Liver</tissue>
    </source>
</reference>
<proteinExistence type="evidence at transcript level"/>
<sequence length="251" mass="28586">MPNQGPVSDWTECSSSAEPPAVARAEGGGGGSAGHSYYQNSKDRIKDGHKVNSPRAKLQELWKMPQTVHTPKSMTEPSFLKHPDLTLVEKHYLCSVAKIYNANYLRTLMKRHYMHVIQRSSQKPGVLTHHRGHLSSRYSQKQHYPCTTWRHQLEREDLGPPNTAAASAPEMIQHSLWRPVRNKEGLKTGYASKTRCKSLKIFRKPGRPFMQSVSANDSESYMNEEKKEEDLLNKCMQSMSIEEQGEHLMLT</sequence>